<name>Y4FQ_SINFN</name>
<organism>
    <name type="scientific">Sinorhizobium fredii (strain NBRC 101917 / NGR234)</name>
    <dbReference type="NCBI Taxonomy" id="394"/>
    <lineage>
        <taxon>Bacteria</taxon>
        <taxon>Pseudomonadati</taxon>
        <taxon>Pseudomonadota</taxon>
        <taxon>Alphaproteobacteria</taxon>
        <taxon>Hyphomicrobiales</taxon>
        <taxon>Rhizobiaceae</taxon>
        <taxon>Sinorhizobium/Ensifer group</taxon>
        <taxon>Sinorhizobium</taxon>
    </lineage>
</organism>
<geneLocation type="plasmid">
    <name>sym pNGR234a</name>
</geneLocation>
<reference key="1">
    <citation type="journal article" date="1997" name="Nature">
        <title>Molecular basis of symbiosis between Rhizobium and legumes.</title>
        <authorList>
            <person name="Freiberg C.A."/>
            <person name="Fellay R."/>
            <person name="Bairoch A."/>
            <person name="Broughton W.J."/>
            <person name="Rosenthal A."/>
            <person name="Perret X."/>
        </authorList>
    </citation>
    <scope>NUCLEOTIDE SEQUENCE [LARGE SCALE GENOMIC DNA]</scope>
    <source>
        <strain>NBRC 101917 / NGR234</strain>
    </source>
</reference>
<reference key="2">
    <citation type="journal article" date="2009" name="Appl. Environ. Microbiol.">
        <title>Rhizobium sp. strain NGR234 possesses a remarkable number of secretion systems.</title>
        <authorList>
            <person name="Schmeisser C."/>
            <person name="Liesegang H."/>
            <person name="Krysciak D."/>
            <person name="Bakkou N."/>
            <person name="Le Quere A."/>
            <person name="Wollherr A."/>
            <person name="Heinemeyer I."/>
            <person name="Morgenstern B."/>
            <person name="Pommerening-Roeser A."/>
            <person name="Flores M."/>
            <person name="Palacios R."/>
            <person name="Brenner S."/>
            <person name="Gottschalk G."/>
            <person name="Schmitz R.A."/>
            <person name="Broughton W.J."/>
            <person name="Perret X."/>
            <person name="Strittmatter A.W."/>
            <person name="Streit W.R."/>
        </authorList>
    </citation>
    <scope>NUCLEOTIDE SEQUENCE [LARGE SCALE GENOMIC DNA]</scope>
    <source>
        <strain>NBRC 101917 / NGR234</strain>
    </source>
</reference>
<evidence type="ECO:0000305" key="1"/>
<comment type="similarity">
    <text evidence="1">Belongs to the ROK (NagC/XylR) family.</text>
</comment>
<protein>
    <recommendedName>
        <fullName>Uncharacterized protein y4fQ</fullName>
    </recommendedName>
</protein>
<keyword id="KW-0614">Plasmid</keyword>
<keyword id="KW-1185">Reference proteome</keyword>
<gene>
    <name type="ordered locus">NGR_a03650</name>
    <name type="ORF">y4fQ</name>
</gene>
<accession>P55455</accession>
<sequence>MPVLPELSLNERRLVELIFKNRGVARIELAQMSGMTGATVTRLVASLLDLGLITEEADRSGAQGQPRRLLQLQARRFFAAGVTFSVTRMEVVIIDLSGSIVATRSVEVHTASPMEVVEAAQAAVDDMLAALSIQKNDLVGIGVSVPGNFGTASNLLKAHPFFPAFEDGQAIEAFREAFDVPCHVENDGTAAALGEYVFAGDNVLDDPLFFIHIGHGVGGGAVIDGRPYGGAHGNACLPGVLYPYDQPRPSGQDLLATLHAAGFHLRDFEEMDAMPQAARSTVIEWITRAGAQLRQAVRVATAFFDPARIVVGGRLPGDLNKRLVETILSEPIEGPSRGLPTAPVSVSRLGIRAGAVGAGCVPFFRAFFTGAVANGGSAYLNGRRPFPRTPAQ</sequence>
<feature type="chain" id="PRO_0000095723" description="Uncharacterized protein y4fQ">
    <location>
        <begin position="1"/>
        <end position="392"/>
    </location>
</feature>
<dbReference type="EMBL" id="U00090">
    <property type="protein sequence ID" value="AAB91673.1"/>
    <property type="molecule type" value="Genomic_DNA"/>
</dbReference>
<dbReference type="RefSeq" id="NP_443861.1">
    <property type="nucleotide sequence ID" value="NC_000914.2"/>
</dbReference>
<dbReference type="RefSeq" id="WP_010875378.1">
    <property type="nucleotide sequence ID" value="NC_000914.2"/>
</dbReference>
<dbReference type="SMR" id="P55455"/>
<dbReference type="KEGG" id="rhi:NGR_a03650"/>
<dbReference type="PATRIC" id="fig|394.7.peg.373"/>
<dbReference type="eggNOG" id="COG1940">
    <property type="taxonomic scope" value="Bacteria"/>
</dbReference>
<dbReference type="HOGENOM" id="CLU_036604_13_0_5"/>
<dbReference type="OrthoDB" id="49685at2"/>
<dbReference type="Proteomes" id="UP000001054">
    <property type="component" value="Plasmid pNGR234a"/>
</dbReference>
<dbReference type="GO" id="GO:0003700">
    <property type="term" value="F:DNA-binding transcription factor activity"/>
    <property type="evidence" value="ECO:0007669"/>
    <property type="project" value="InterPro"/>
</dbReference>
<dbReference type="CDD" id="cd23763">
    <property type="entry name" value="ASKHA_ATPase_ROK"/>
    <property type="match status" value="1"/>
</dbReference>
<dbReference type="Gene3D" id="3.30.420.40">
    <property type="match status" value="2"/>
</dbReference>
<dbReference type="Gene3D" id="1.10.10.10">
    <property type="entry name" value="Winged helix-like DNA-binding domain superfamily/Winged helix DNA-binding domain"/>
    <property type="match status" value="1"/>
</dbReference>
<dbReference type="InterPro" id="IPR043129">
    <property type="entry name" value="ATPase_NBD"/>
</dbReference>
<dbReference type="InterPro" id="IPR000600">
    <property type="entry name" value="ROK"/>
</dbReference>
<dbReference type="InterPro" id="IPR018335">
    <property type="entry name" value="Tscrpt_reg_HTH_Crp-type_CS"/>
</dbReference>
<dbReference type="InterPro" id="IPR036388">
    <property type="entry name" value="WH-like_DNA-bd_sf"/>
</dbReference>
<dbReference type="InterPro" id="IPR036390">
    <property type="entry name" value="WH_DNA-bd_sf"/>
</dbReference>
<dbReference type="PANTHER" id="PTHR18964:SF149">
    <property type="entry name" value="BIFUNCTIONAL UDP-N-ACETYLGLUCOSAMINE 2-EPIMERASE_N-ACETYLMANNOSAMINE KINASE"/>
    <property type="match status" value="1"/>
</dbReference>
<dbReference type="PANTHER" id="PTHR18964">
    <property type="entry name" value="ROK (REPRESSOR, ORF, KINASE) FAMILY"/>
    <property type="match status" value="1"/>
</dbReference>
<dbReference type="Pfam" id="PF13412">
    <property type="entry name" value="HTH_24"/>
    <property type="match status" value="1"/>
</dbReference>
<dbReference type="Pfam" id="PF00480">
    <property type="entry name" value="ROK"/>
    <property type="match status" value="1"/>
</dbReference>
<dbReference type="SUPFAM" id="SSF53067">
    <property type="entry name" value="Actin-like ATPase domain"/>
    <property type="match status" value="1"/>
</dbReference>
<dbReference type="SUPFAM" id="SSF46785">
    <property type="entry name" value="Winged helix' DNA-binding domain"/>
    <property type="match status" value="1"/>
</dbReference>
<proteinExistence type="inferred from homology"/>